<sequence length="360" mass="39798">MIIWLAELLQPHFSFFRLFEYLSFRAIASILTALCLSLWMGPRLIERLQMLQIGQVVRNDGPESHFSKRGTPTMGGVMILAAIIITVLMWADLSNPYVWAVLVVLAGYGAVGFVDDYRKVVRKNTDGLIARWKYFWQSAIALVVAFALYAHGHDTAATQLVVPFFKDVMPQLGLLYIVLTYFVIVGTSNAVNLTDGLDGLAIMPTVMVAAGFAVIAWATGNVNFASYLHIPYIPYTSELVVVCTAIVGAGLGFLWFNTYPAQVFMGDVGSLALGGALGVIAVLVRQELVLVIMGGVFVMETLSVILQVGSYKLRGQRIFRMAPIHHHYELKGWPEPRVIVRFWIISMVLVLVGLATLKVR</sequence>
<organism>
    <name type="scientific">Vibrio atlanticus (strain LGP32)</name>
    <name type="common">Vibrio splendidus (strain Mel32)</name>
    <dbReference type="NCBI Taxonomy" id="575788"/>
    <lineage>
        <taxon>Bacteria</taxon>
        <taxon>Pseudomonadati</taxon>
        <taxon>Pseudomonadota</taxon>
        <taxon>Gammaproteobacteria</taxon>
        <taxon>Vibrionales</taxon>
        <taxon>Vibrionaceae</taxon>
        <taxon>Vibrio</taxon>
    </lineage>
</organism>
<name>MRAY_VIBA3</name>
<feature type="chain" id="PRO_1000117206" description="Phospho-N-acetylmuramoyl-pentapeptide-transferase">
    <location>
        <begin position="1"/>
        <end position="360"/>
    </location>
</feature>
<feature type="transmembrane region" description="Helical" evidence="1">
    <location>
        <begin position="21"/>
        <end position="41"/>
    </location>
</feature>
<feature type="transmembrane region" description="Helical" evidence="1">
    <location>
        <begin position="73"/>
        <end position="93"/>
    </location>
</feature>
<feature type="transmembrane region" description="Helical" evidence="1">
    <location>
        <begin position="94"/>
        <end position="114"/>
    </location>
</feature>
<feature type="transmembrane region" description="Helical" evidence="1">
    <location>
        <begin position="132"/>
        <end position="152"/>
    </location>
</feature>
<feature type="transmembrane region" description="Helical" evidence="1">
    <location>
        <begin position="168"/>
        <end position="188"/>
    </location>
</feature>
<feature type="transmembrane region" description="Helical" evidence="1">
    <location>
        <begin position="199"/>
        <end position="219"/>
    </location>
</feature>
<feature type="transmembrane region" description="Helical" evidence="1">
    <location>
        <begin position="239"/>
        <end position="259"/>
    </location>
</feature>
<feature type="transmembrane region" description="Helical" evidence="1">
    <location>
        <begin position="263"/>
        <end position="283"/>
    </location>
</feature>
<feature type="transmembrane region" description="Helical" evidence="1">
    <location>
        <begin position="288"/>
        <end position="308"/>
    </location>
</feature>
<feature type="transmembrane region" description="Helical" evidence="1">
    <location>
        <begin position="338"/>
        <end position="358"/>
    </location>
</feature>
<dbReference type="EC" id="2.7.8.13" evidence="1"/>
<dbReference type="EMBL" id="FM954972">
    <property type="protein sequence ID" value="CAV17454.1"/>
    <property type="molecule type" value="Genomic_DNA"/>
</dbReference>
<dbReference type="SMR" id="B7VJ00"/>
<dbReference type="STRING" id="575788.VS_0447"/>
<dbReference type="KEGG" id="vsp:VS_0447"/>
<dbReference type="eggNOG" id="COG0472">
    <property type="taxonomic scope" value="Bacteria"/>
</dbReference>
<dbReference type="HOGENOM" id="CLU_023982_0_0_6"/>
<dbReference type="UniPathway" id="UPA00219"/>
<dbReference type="Proteomes" id="UP000009100">
    <property type="component" value="Chromosome 1"/>
</dbReference>
<dbReference type="GO" id="GO:0005886">
    <property type="term" value="C:plasma membrane"/>
    <property type="evidence" value="ECO:0007669"/>
    <property type="project" value="UniProtKB-SubCell"/>
</dbReference>
<dbReference type="GO" id="GO:0046872">
    <property type="term" value="F:metal ion binding"/>
    <property type="evidence" value="ECO:0007669"/>
    <property type="project" value="UniProtKB-KW"/>
</dbReference>
<dbReference type="GO" id="GO:0008963">
    <property type="term" value="F:phospho-N-acetylmuramoyl-pentapeptide-transferase activity"/>
    <property type="evidence" value="ECO:0007669"/>
    <property type="project" value="UniProtKB-UniRule"/>
</dbReference>
<dbReference type="GO" id="GO:0051992">
    <property type="term" value="F:UDP-N-acetylmuramoyl-L-alanyl-D-glutamyl-meso-2,6-diaminopimelyl-D-alanyl-D-alanine:undecaprenyl-phosphate transferase activity"/>
    <property type="evidence" value="ECO:0007669"/>
    <property type="project" value="RHEA"/>
</dbReference>
<dbReference type="GO" id="GO:0051301">
    <property type="term" value="P:cell division"/>
    <property type="evidence" value="ECO:0007669"/>
    <property type="project" value="UniProtKB-KW"/>
</dbReference>
<dbReference type="GO" id="GO:0071555">
    <property type="term" value="P:cell wall organization"/>
    <property type="evidence" value="ECO:0007669"/>
    <property type="project" value="UniProtKB-KW"/>
</dbReference>
<dbReference type="GO" id="GO:0009252">
    <property type="term" value="P:peptidoglycan biosynthetic process"/>
    <property type="evidence" value="ECO:0007669"/>
    <property type="project" value="UniProtKB-UniRule"/>
</dbReference>
<dbReference type="GO" id="GO:0008360">
    <property type="term" value="P:regulation of cell shape"/>
    <property type="evidence" value="ECO:0007669"/>
    <property type="project" value="UniProtKB-KW"/>
</dbReference>
<dbReference type="CDD" id="cd06852">
    <property type="entry name" value="GT_MraY"/>
    <property type="match status" value="1"/>
</dbReference>
<dbReference type="HAMAP" id="MF_00038">
    <property type="entry name" value="MraY"/>
    <property type="match status" value="1"/>
</dbReference>
<dbReference type="InterPro" id="IPR000715">
    <property type="entry name" value="Glycosyl_transferase_4"/>
</dbReference>
<dbReference type="InterPro" id="IPR003524">
    <property type="entry name" value="PNAcMuramoyl-5peptid_Trfase"/>
</dbReference>
<dbReference type="InterPro" id="IPR018480">
    <property type="entry name" value="PNAcMuramoyl-5peptid_Trfase_CS"/>
</dbReference>
<dbReference type="NCBIfam" id="TIGR00445">
    <property type="entry name" value="mraY"/>
    <property type="match status" value="1"/>
</dbReference>
<dbReference type="PANTHER" id="PTHR22926">
    <property type="entry name" value="PHOSPHO-N-ACETYLMURAMOYL-PENTAPEPTIDE-TRANSFERASE"/>
    <property type="match status" value="1"/>
</dbReference>
<dbReference type="PANTHER" id="PTHR22926:SF5">
    <property type="entry name" value="PHOSPHO-N-ACETYLMURAMOYL-PENTAPEPTIDE-TRANSFERASE HOMOLOG"/>
    <property type="match status" value="1"/>
</dbReference>
<dbReference type="Pfam" id="PF00953">
    <property type="entry name" value="Glycos_transf_4"/>
    <property type="match status" value="1"/>
</dbReference>
<dbReference type="Pfam" id="PF10555">
    <property type="entry name" value="MraY_sig1"/>
    <property type="match status" value="1"/>
</dbReference>
<dbReference type="PROSITE" id="PS01347">
    <property type="entry name" value="MRAY_1"/>
    <property type="match status" value="1"/>
</dbReference>
<dbReference type="PROSITE" id="PS01348">
    <property type="entry name" value="MRAY_2"/>
    <property type="match status" value="1"/>
</dbReference>
<gene>
    <name evidence="1" type="primary">mraY</name>
    <name type="ordered locus">VS_0447</name>
</gene>
<protein>
    <recommendedName>
        <fullName evidence="1">Phospho-N-acetylmuramoyl-pentapeptide-transferase</fullName>
        <ecNumber evidence="1">2.7.8.13</ecNumber>
    </recommendedName>
    <alternativeName>
        <fullName evidence="1">UDP-MurNAc-pentapeptide phosphotransferase</fullName>
    </alternativeName>
</protein>
<proteinExistence type="inferred from homology"/>
<reference key="1">
    <citation type="submission" date="2009-02" db="EMBL/GenBank/DDBJ databases">
        <title>Vibrio splendidus str. LGP32 complete genome.</title>
        <authorList>
            <person name="Mazel D."/>
            <person name="Le Roux F."/>
        </authorList>
    </citation>
    <scope>NUCLEOTIDE SEQUENCE [LARGE SCALE GENOMIC DNA]</scope>
    <source>
        <strain>LGP32</strain>
    </source>
</reference>
<evidence type="ECO:0000255" key="1">
    <source>
        <dbReference type="HAMAP-Rule" id="MF_00038"/>
    </source>
</evidence>
<keyword id="KW-0131">Cell cycle</keyword>
<keyword id="KW-0132">Cell division</keyword>
<keyword id="KW-0997">Cell inner membrane</keyword>
<keyword id="KW-1003">Cell membrane</keyword>
<keyword id="KW-0133">Cell shape</keyword>
<keyword id="KW-0961">Cell wall biogenesis/degradation</keyword>
<keyword id="KW-0460">Magnesium</keyword>
<keyword id="KW-0472">Membrane</keyword>
<keyword id="KW-0479">Metal-binding</keyword>
<keyword id="KW-0573">Peptidoglycan synthesis</keyword>
<keyword id="KW-0808">Transferase</keyword>
<keyword id="KW-0812">Transmembrane</keyword>
<keyword id="KW-1133">Transmembrane helix</keyword>
<comment type="function">
    <text evidence="1">Catalyzes the initial step of the lipid cycle reactions in the biosynthesis of the cell wall peptidoglycan: transfers peptidoglycan precursor phospho-MurNAc-pentapeptide from UDP-MurNAc-pentapeptide onto the lipid carrier undecaprenyl phosphate, yielding undecaprenyl-pyrophosphoryl-MurNAc-pentapeptide, known as lipid I.</text>
</comment>
<comment type="catalytic activity">
    <reaction evidence="1">
        <text>UDP-N-acetyl-alpha-D-muramoyl-L-alanyl-gamma-D-glutamyl-meso-2,6-diaminopimeloyl-D-alanyl-D-alanine + di-trans,octa-cis-undecaprenyl phosphate = di-trans,octa-cis-undecaprenyl diphospho-N-acetyl-alpha-D-muramoyl-L-alanyl-D-glutamyl-meso-2,6-diaminopimeloyl-D-alanyl-D-alanine + UMP</text>
        <dbReference type="Rhea" id="RHEA:28386"/>
        <dbReference type="ChEBI" id="CHEBI:57865"/>
        <dbReference type="ChEBI" id="CHEBI:60392"/>
        <dbReference type="ChEBI" id="CHEBI:61386"/>
        <dbReference type="ChEBI" id="CHEBI:61387"/>
        <dbReference type="EC" id="2.7.8.13"/>
    </reaction>
</comment>
<comment type="cofactor">
    <cofactor evidence="1">
        <name>Mg(2+)</name>
        <dbReference type="ChEBI" id="CHEBI:18420"/>
    </cofactor>
</comment>
<comment type="pathway">
    <text evidence="1">Cell wall biogenesis; peptidoglycan biosynthesis.</text>
</comment>
<comment type="subcellular location">
    <subcellularLocation>
        <location evidence="1">Cell inner membrane</location>
        <topology evidence="1">Multi-pass membrane protein</topology>
    </subcellularLocation>
</comment>
<comment type="similarity">
    <text evidence="1">Belongs to the glycosyltransferase 4 family. MraY subfamily.</text>
</comment>
<accession>B7VJ00</accession>